<sequence>MSSPNIWSTGSSVYSTPVFSQKMTVWILLLLSLYPGFTSQKSDDDYEDYASNKTWVLTPKVPEGDVTVILNNLLEGYDNKLRPDIGVKPTLIHTDMYVNSIGPVNAINMEYTIDIFFAQTWYDRRLKFNSTIKVLRLNSNMVGKIWIPDTFFRNSKKADAHWITTPNRMLRIWNDGRVLYTLRLTIDAECQLQLHNFPMDEHSCPLEFSSYGYPREEIVYQWKRSSVEVGDTRSWRLYQFSFVGLRNTTEVVKTTSGDYVVMSVYFDLSRRMGYFTIQTYIPCTLIVVLSWVSFWINKDAVPARTSLGITTVLTMTTLSTIARKSLPKVSYVTAMDLFVSVCFIFVFSALVEYGTLHYFVSNRKPSKDKDKKKKNPAPTIDIRPRSATIQMNNATHLQERDEEYGYECLDGKDCASFFCCFEDCRTGAWRHGRIHIRIAKMDSYARIFFPTAFCLFNLVYWVSYLYL</sequence>
<reference key="1">
    <citation type="submission" date="2004-11" db="EMBL/GenBank/DDBJ databases">
        <authorList>
            <consortium name="The German cDNA consortium"/>
        </authorList>
    </citation>
    <scope>NUCLEOTIDE SEQUENCE [LARGE SCALE MRNA]</scope>
    <source>
        <tissue>Brain cortex</tissue>
    </source>
</reference>
<evidence type="ECO:0000250" key="1">
    <source>
        <dbReference type="UniProtKB" id="P08219"/>
    </source>
</evidence>
<evidence type="ECO:0000250" key="2">
    <source>
        <dbReference type="UniProtKB" id="P18507"/>
    </source>
</evidence>
<evidence type="ECO:0000250" key="3">
    <source>
        <dbReference type="UniProtKB" id="P18508"/>
    </source>
</evidence>
<evidence type="ECO:0000250" key="4">
    <source>
        <dbReference type="UniProtKB" id="P22723"/>
    </source>
</evidence>
<evidence type="ECO:0000255" key="5"/>
<evidence type="ECO:0000305" key="6"/>
<organism>
    <name type="scientific">Pongo abelii</name>
    <name type="common">Sumatran orangutan</name>
    <name type="synonym">Pongo pygmaeus abelii</name>
    <dbReference type="NCBI Taxonomy" id="9601"/>
    <lineage>
        <taxon>Eukaryota</taxon>
        <taxon>Metazoa</taxon>
        <taxon>Chordata</taxon>
        <taxon>Craniata</taxon>
        <taxon>Vertebrata</taxon>
        <taxon>Euteleostomi</taxon>
        <taxon>Mammalia</taxon>
        <taxon>Eutheria</taxon>
        <taxon>Euarchontoglires</taxon>
        <taxon>Primates</taxon>
        <taxon>Haplorrhini</taxon>
        <taxon>Catarrhini</taxon>
        <taxon>Hominidae</taxon>
        <taxon>Pongo</taxon>
    </lineage>
</organism>
<feature type="signal peptide" evidence="5">
    <location>
        <begin position="1"/>
        <end position="39"/>
    </location>
</feature>
<feature type="chain" id="PRO_0000253893" description="Gamma-aminobutyric acid receptor subunit gamma-2">
    <location>
        <begin position="40"/>
        <end position="467"/>
    </location>
</feature>
<feature type="topological domain" description="Extracellular" evidence="6">
    <location>
        <begin position="40"/>
        <end position="275"/>
    </location>
</feature>
<feature type="transmembrane region" description="Helical" evidence="2">
    <location>
        <begin position="276"/>
        <end position="296"/>
    </location>
</feature>
<feature type="topological domain" description="Cytoplasmic" evidence="6">
    <location>
        <begin position="297"/>
        <end position="302"/>
    </location>
</feature>
<feature type="transmembrane region" description="Helical" evidence="2">
    <location>
        <begin position="303"/>
        <end position="322"/>
    </location>
</feature>
<feature type="topological domain" description="Extracellular" evidence="6">
    <location>
        <begin position="323"/>
        <end position="334"/>
    </location>
</feature>
<feature type="transmembrane region" description="Helical" evidence="2">
    <location>
        <begin position="335"/>
        <end position="359"/>
    </location>
</feature>
<feature type="topological domain" description="Cytoplasmic" evidence="6">
    <location>
        <begin position="360"/>
        <end position="443"/>
    </location>
</feature>
<feature type="transmembrane region" description="Helical" evidence="2">
    <location>
        <begin position="444"/>
        <end position="464"/>
    </location>
</feature>
<feature type="topological domain" description="Extracellular" evidence="6">
    <location>
        <begin position="465"/>
        <end position="467"/>
    </location>
</feature>
<feature type="region of interest" description="Interaction with GABARAP" evidence="5">
    <location>
        <begin position="425"/>
        <end position="442"/>
    </location>
</feature>
<feature type="glycosylation site" description="N-linked (GlcNAc...) asparagine" evidence="5">
    <location>
        <position position="52"/>
    </location>
</feature>
<feature type="glycosylation site" description="N-linked (GlcNAc...) asparagine" evidence="5">
    <location>
        <position position="129"/>
    </location>
</feature>
<feature type="glycosylation site" description="N-linked (GlcNAc...) asparagine" evidence="5">
    <location>
        <position position="247"/>
    </location>
</feature>
<feature type="disulfide bond" evidence="2">
    <location>
        <begin position="190"/>
        <end position="204"/>
    </location>
</feature>
<dbReference type="EMBL" id="CR857632">
    <property type="protein sequence ID" value="CAH89906.1"/>
    <property type="molecule type" value="mRNA"/>
</dbReference>
<dbReference type="RefSeq" id="NP_001127212.1">
    <property type="nucleotide sequence ID" value="NM_001133740.1"/>
</dbReference>
<dbReference type="SMR" id="Q5REA1"/>
<dbReference type="FunCoup" id="Q5REA1">
    <property type="interactions" value="536"/>
</dbReference>
<dbReference type="STRING" id="9601.ENSPPYP00000017923"/>
<dbReference type="GlyCosmos" id="Q5REA1">
    <property type="glycosylation" value="3 sites, No reported glycans"/>
</dbReference>
<dbReference type="Ensembl" id="ENSPPYT00000018641.3">
    <property type="protein sequence ID" value="ENSPPYP00000017923.2"/>
    <property type="gene ID" value="ENSPPYG00000016015.3"/>
</dbReference>
<dbReference type="GeneID" id="100174267"/>
<dbReference type="KEGG" id="pon:100174267"/>
<dbReference type="CTD" id="2566"/>
<dbReference type="eggNOG" id="KOG3642">
    <property type="taxonomic scope" value="Eukaryota"/>
</dbReference>
<dbReference type="GeneTree" id="ENSGT00940000156685"/>
<dbReference type="HOGENOM" id="CLU_010920_2_0_1"/>
<dbReference type="InParanoid" id="Q5REA1"/>
<dbReference type="OrthoDB" id="203862at2759"/>
<dbReference type="TreeFam" id="TF315453"/>
<dbReference type="Proteomes" id="UP000001595">
    <property type="component" value="Chromosome 5"/>
</dbReference>
<dbReference type="GO" id="GO:0034707">
    <property type="term" value="C:chloride channel complex"/>
    <property type="evidence" value="ECO:0007669"/>
    <property type="project" value="UniProtKB-KW"/>
</dbReference>
<dbReference type="GO" id="GO:0030659">
    <property type="term" value="C:cytoplasmic vesicle membrane"/>
    <property type="evidence" value="ECO:0007669"/>
    <property type="project" value="UniProtKB-SubCell"/>
</dbReference>
<dbReference type="GO" id="GO:0030425">
    <property type="term" value="C:dendrite"/>
    <property type="evidence" value="ECO:0007669"/>
    <property type="project" value="UniProtKB-SubCell"/>
</dbReference>
<dbReference type="GO" id="GO:1902711">
    <property type="term" value="C:GABA-A receptor complex"/>
    <property type="evidence" value="ECO:0000250"/>
    <property type="project" value="UniProtKB"/>
</dbReference>
<dbReference type="GO" id="GO:0005886">
    <property type="term" value="C:plasma membrane"/>
    <property type="evidence" value="ECO:0000250"/>
    <property type="project" value="UniProtKB"/>
</dbReference>
<dbReference type="GO" id="GO:0099634">
    <property type="term" value="C:postsynaptic specialization membrane"/>
    <property type="evidence" value="ECO:0000250"/>
    <property type="project" value="UniProtKB"/>
</dbReference>
<dbReference type="GO" id="GO:0005254">
    <property type="term" value="F:chloride channel activity"/>
    <property type="evidence" value="ECO:0000250"/>
    <property type="project" value="UniProtKB"/>
</dbReference>
<dbReference type="GO" id="GO:0004890">
    <property type="term" value="F:GABA-A receptor activity"/>
    <property type="evidence" value="ECO:0000250"/>
    <property type="project" value="UniProtKB"/>
</dbReference>
<dbReference type="GO" id="GO:0022851">
    <property type="term" value="F:GABA-gated chloride ion channel activity"/>
    <property type="evidence" value="ECO:0000250"/>
    <property type="project" value="UniProtKB"/>
</dbReference>
<dbReference type="GO" id="GO:0071420">
    <property type="term" value="P:cellular response to histamine"/>
    <property type="evidence" value="ECO:0000250"/>
    <property type="project" value="UniProtKB"/>
</dbReference>
<dbReference type="GO" id="GO:1902476">
    <property type="term" value="P:chloride transmembrane transport"/>
    <property type="evidence" value="ECO:0000250"/>
    <property type="project" value="UniProtKB"/>
</dbReference>
<dbReference type="GO" id="GO:0007214">
    <property type="term" value="P:gamma-aminobutyric acid signaling pathway"/>
    <property type="evidence" value="ECO:0007669"/>
    <property type="project" value="InterPro"/>
</dbReference>
<dbReference type="GO" id="GO:1904862">
    <property type="term" value="P:inhibitory synapse assembly"/>
    <property type="evidence" value="ECO:0000250"/>
    <property type="project" value="UniProtKB"/>
</dbReference>
<dbReference type="CDD" id="cd19000">
    <property type="entry name" value="LGIC_ECD_GABAAR_G"/>
    <property type="match status" value="1"/>
</dbReference>
<dbReference type="CDD" id="cd19054">
    <property type="entry name" value="LGIC_TM_GABAAR_gamma"/>
    <property type="match status" value="1"/>
</dbReference>
<dbReference type="FunFam" id="2.70.170.10:FF:000003">
    <property type="entry name" value="Putative gamma-aminobutyric acid receptor subunit gamma-2"/>
    <property type="match status" value="1"/>
</dbReference>
<dbReference type="Gene3D" id="2.70.170.10">
    <property type="entry name" value="Neurotransmitter-gated ion-channel ligand-binding domain"/>
    <property type="match status" value="1"/>
</dbReference>
<dbReference type="Gene3D" id="1.20.58.390">
    <property type="entry name" value="Neurotransmitter-gated ion-channel transmembrane domain"/>
    <property type="match status" value="1"/>
</dbReference>
<dbReference type="InterPro" id="IPR006028">
    <property type="entry name" value="GABAA/Glycine_rcpt"/>
</dbReference>
<dbReference type="InterPro" id="IPR005439">
    <property type="entry name" value="GABBAg2_rcpt"/>
</dbReference>
<dbReference type="InterPro" id="IPR005437">
    <property type="entry name" value="GABRG-1/4"/>
</dbReference>
<dbReference type="InterPro" id="IPR006202">
    <property type="entry name" value="Neur_chan_lig-bd"/>
</dbReference>
<dbReference type="InterPro" id="IPR036734">
    <property type="entry name" value="Neur_chan_lig-bd_sf"/>
</dbReference>
<dbReference type="InterPro" id="IPR006201">
    <property type="entry name" value="Neur_channel"/>
</dbReference>
<dbReference type="InterPro" id="IPR036719">
    <property type="entry name" value="Neuro-gated_channel_TM_sf"/>
</dbReference>
<dbReference type="InterPro" id="IPR038050">
    <property type="entry name" value="Neuro_actylchol_rec"/>
</dbReference>
<dbReference type="InterPro" id="IPR006029">
    <property type="entry name" value="Neurotrans-gated_channel_TM"/>
</dbReference>
<dbReference type="InterPro" id="IPR018000">
    <property type="entry name" value="Neurotransmitter_ion_chnl_CS"/>
</dbReference>
<dbReference type="NCBIfam" id="TIGR00860">
    <property type="entry name" value="LIC"/>
    <property type="match status" value="1"/>
</dbReference>
<dbReference type="PANTHER" id="PTHR18945">
    <property type="entry name" value="NEUROTRANSMITTER GATED ION CHANNEL"/>
    <property type="match status" value="1"/>
</dbReference>
<dbReference type="Pfam" id="PF02931">
    <property type="entry name" value="Neur_chan_LBD"/>
    <property type="match status" value="1"/>
</dbReference>
<dbReference type="Pfam" id="PF02932">
    <property type="entry name" value="Neur_chan_memb"/>
    <property type="match status" value="2"/>
</dbReference>
<dbReference type="PRINTS" id="PR00253">
    <property type="entry name" value="GABAARECEPTR"/>
</dbReference>
<dbReference type="PRINTS" id="PR01620">
    <property type="entry name" value="GABAARGAMMA"/>
</dbReference>
<dbReference type="PRINTS" id="PR01622">
    <property type="entry name" value="GABAARGAMMA2"/>
</dbReference>
<dbReference type="PRINTS" id="PR00252">
    <property type="entry name" value="NRIONCHANNEL"/>
</dbReference>
<dbReference type="SUPFAM" id="SSF90112">
    <property type="entry name" value="Neurotransmitter-gated ion-channel transmembrane pore"/>
    <property type="match status" value="1"/>
</dbReference>
<dbReference type="SUPFAM" id="SSF63712">
    <property type="entry name" value="Nicotinic receptor ligand binding domain-like"/>
    <property type="match status" value="1"/>
</dbReference>
<dbReference type="PROSITE" id="PS00236">
    <property type="entry name" value="NEUROTR_ION_CHANNEL"/>
    <property type="match status" value="1"/>
</dbReference>
<name>GBRG2_PONAB</name>
<protein>
    <recommendedName>
        <fullName evidence="2">Gamma-aminobutyric acid receptor subunit gamma-2</fullName>
    </recommendedName>
    <alternativeName>
        <fullName evidence="2">GABA(A) receptor subunit gamma-2</fullName>
        <shortName evidence="2">GABAAR subunit gamma-2</shortName>
    </alternativeName>
</protein>
<accession>Q5REA1</accession>
<gene>
    <name type="primary">GABRG2</name>
</gene>
<comment type="function">
    <text evidence="1 2 3 4">Gamma subunit of the heteropentameric ligand-gated chloride channel gated by gamma-aminobutyric acid (GABA), a major inhibitory neurotransmitter in the brain. GABA-gated chloride channels, also named GABA(A) receptors (GABAAR), consist of five subunits arranged around a central pore and contain GABA active binding site(s) located at the alpha and beta subunit interface(s). When activated by GABA, GABAARs selectively allow the flow of chloride anions across the cell membrane down their electrochemical gradient (By similarity). Gamma-2/GABRG2-containing GABAARs are found at both synaptic and extrasynaptic sites (By similarity). Chloride influx into the postsynaptic neuron following GABAAR opening decreases the neuron ability to generate a new action potential, thereby reducing nerve transmission (By similarity). GABAARs containing alpha-1 and beta-2 or -3 subunits exhibit synaptogenic activity; the gamma-2 subunit being necessary but not sufficient to induce rapid synaptic contacts formation (By similarity). Extrasynaptic gamma-2-containing receptors contribute to the tonic GABAergic inhibition (By similarity). GABAARs function also as histamine receptor where histamine binds at the interface of two neighboring beta subunits and potentiates GABA response in a gamma-2 subunit-controlled manner (By similarity).</text>
</comment>
<comment type="catalytic activity">
    <reaction evidence="2">
        <text>chloride(in) = chloride(out)</text>
        <dbReference type="Rhea" id="RHEA:29823"/>
        <dbReference type="ChEBI" id="CHEBI:17996"/>
    </reaction>
</comment>
<comment type="activity regulation">
    <text evidence="2 3 4">Allosterically activated by benzodiazepines (By similarity). Activated by pentobarbital (By similarity). Inhibited by the antagonist bicuculline (By similarity). Inhibited by zinc ions (By similarity). Potentiated by histamine (By similarity).</text>
</comment>
<comment type="subunit">
    <text evidence="2 3 4">Heteropentamer, formed by a combination of alpha (GABRA1-6), beta (GABRB1-3), gamma (GABRG1-3), delta (GABRD), epsilon (GABRE), rho (GABRR1-3), pi (GABRP) and theta (GABRQ) chains, each subunit exhibiting distinct physiological and pharmacological properties (By similarity). Interacts with GABARAP (By similarity). Interacts with KIF21B (By similarity). Identified in a complex of 720 kDa composed of LHFPL4, NLGN2, GABRA1, GABRB2, GABRG2 and GABRB3 (By similarity). Interacts with LHFPL4 (By similarity). Interacts with SHISA7; interaction leads to the regulation of GABA(A) receptor trafficking, channel deactivation kinetics and pharmacology (By similarity).</text>
</comment>
<comment type="subcellular location">
    <subcellularLocation>
        <location evidence="2">Postsynaptic cell membrane</location>
        <topology evidence="2">Multi-pass membrane protein</topology>
    </subcellularLocation>
    <subcellularLocation>
        <location evidence="2">Cell membrane</location>
        <topology evidence="2">Multi-pass membrane protein</topology>
    </subcellularLocation>
    <subcellularLocation>
        <location evidence="4">Cell projection</location>
        <location evidence="4">Dendrite</location>
    </subcellularLocation>
    <subcellularLocation>
        <location evidence="3">Cytoplasmic vesicle membrane</location>
    </subcellularLocation>
</comment>
<comment type="domain">
    <text evidence="4">The extracellular domain contributes to synaptic contact formation.</text>
</comment>
<comment type="domain">
    <text evidence="2">GABAARs subunits share a common topological structure: a peptide sequence made up of a long extracellular N-terminal, four transmembrane domains, intracellular or cytoplasmic domain located between the third and the fourth transmembrane domains.</text>
</comment>
<comment type="PTM">
    <text evidence="4">Palmitoylated by ZDHHC3/GODZ; required for the accumulation of GABA(A) receptors at the postsynaptic membrane of inhibitory GABAergic synapses.</text>
</comment>
<comment type="PTM">
    <text evidence="4">Glycosylated.</text>
</comment>
<comment type="similarity">
    <text evidence="6">Belongs to the ligand-gated ion channel (TC 1.A.9) family. Gamma-aminobutyric acid receptor (TC 1.A.9.5) subfamily. GABRG2 sub-subfamily.</text>
</comment>
<keyword id="KW-1003">Cell membrane</keyword>
<keyword id="KW-0966">Cell projection</keyword>
<keyword id="KW-0868">Chloride</keyword>
<keyword id="KW-0869">Chloride channel</keyword>
<keyword id="KW-0968">Cytoplasmic vesicle</keyword>
<keyword id="KW-1015">Disulfide bond</keyword>
<keyword id="KW-0325">Glycoprotein</keyword>
<keyword id="KW-0407">Ion channel</keyword>
<keyword id="KW-0406">Ion transport</keyword>
<keyword id="KW-0449">Lipoprotein</keyword>
<keyword id="KW-0472">Membrane</keyword>
<keyword id="KW-0564">Palmitate</keyword>
<keyword id="KW-0628">Postsynaptic cell membrane</keyword>
<keyword id="KW-1185">Reference proteome</keyword>
<keyword id="KW-0732">Signal</keyword>
<keyword id="KW-0770">Synapse</keyword>
<keyword id="KW-0812">Transmembrane</keyword>
<keyword id="KW-1133">Transmembrane helix</keyword>
<keyword id="KW-0813">Transport</keyword>
<proteinExistence type="evidence at transcript level"/>